<name>TORD_SALSV</name>
<reference key="1">
    <citation type="journal article" date="2011" name="J. Bacteriol.">
        <title>Comparative genomics of 28 Salmonella enterica isolates: evidence for CRISPR-mediated adaptive sublineage evolution.</title>
        <authorList>
            <person name="Fricke W.F."/>
            <person name="Mammel M.K."/>
            <person name="McDermott P.F."/>
            <person name="Tartera C."/>
            <person name="White D.G."/>
            <person name="Leclerc J.E."/>
            <person name="Ravel J."/>
            <person name="Cebula T.A."/>
        </authorList>
    </citation>
    <scope>NUCLEOTIDE SEQUENCE [LARGE SCALE GENOMIC DNA]</scope>
    <source>
        <strain>CVM19633</strain>
    </source>
</reference>
<gene>
    <name evidence="1" type="primary">torD</name>
    <name type="ordered locus">SeSA_A4032</name>
</gene>
<sequence length="210" mass="23825">MNKQPALAQEQYACVYAWLALLFFREVDDEGLIQLQSAEIADWLALLKRQPALAASVALLEQKIAALSLRQDAQLELAADFCGLFLMTDKKSALPYASQYPQQEPGMIKHLLLEAGMEVNDDFKEPTDHLAIYLELLSHLHFSLGESFQQRRMNKLRQKTLSSLLEWLPEFTNNCFKHDSYGFYAALSQLLLAIVRFDDGKEDLSIVAAE</sequence>
<comment type="function">
    <text evidence="1">Involved in the biogenesis of TorA. Acts on TorA before the insertion of the molybdenum cofactor and, as a result, probably favors a conformation of the apoenzyme that is competent for acquiring the cofactor.</text>
</comment>
<comment type="subcellular location">
    <subcellularLocation>
        <location evidence="1">Cytoplasm</location>
    </subcellularLocation>
</comment>
<comment type="similarity">
    <text evidence="1">Belongs to the TorD/DmsD family. TorD subfamily.</text>
</comment>
<proteinExistence type="inferred from homology"/>
<keyword id="KW-0143">Chaperone</keyword>
<keyword id="KW-0963">Cytoplasm</keyword>
<organism>
    <name type="scientific">Salmonella schwarzengrund (strain CVM19633)</name>
    <dbReference type="NCBI Taxonomy" id="439843"/>
    <lineage>
        <taxon>Bacteria</taxon>
        <taxon>Pseudomonadati</taxon>
        <taxon>Pseudomonadota</taxon>
        <taxon>Gammaproteobacteria</taxon>
        <taxon>Enterobacterales</taxon>
        <taxon>Enterobacteriaceae</taxon>
        <taxon>Salmonella</taxon>
    </lineage>
</organism>
<protein>
    <recommendedName>
        <fullName evidence="1">Chaperone protein TorD</fullName>
    </recommendedName>
</protein>
<feature type="chain" id="PRO_1000137518" description="Chaperone protein TorD">
    <location>
        <begin position="1"/>
        <end position="210"/>
    </location>
</feature>
<dbReference type="EMBL" id="CP001127">
    <property type="protein sequence ID" value="ACF92864.1"/>
    <property type="molecule type" value="Genomic_DNA"/>
</dbReference>
<dbReference type="RefSeq" id="WP_001041512.1">
    <property type="nucleotide sequence ID" value="NC_011094.1"/>
</dbReference>
<dbReference type="SMR" id="B4TMY9"/>
<dbReference type="KEGG" id="sew:SeSA_A4032"/>
<dbReference type="HOGENOM" id="CLU_077650_4_0_6"/>
<dbReference type="Proteomes" id="UP000001865">
    <property type="component" value="Chromosome"/>
</dbReference>
<dbReference type="GO" id="GO:0005737">
    <property type="term" value="C:cytoplasm"/>
    <property type="evidence" value="ECO:0007669"/>
    <property type="project" value="UniProtKB-SubCell"/>
</dbReference>
<dbReference type="GO" id="GO:0051259">
    <property type="term" value="P:protein complex oligomerization"/>
    <property type="evidence" value="ECO:0007669"/>
    <property type="project" value="InterPro"/>
</dbReference>
<dbReference type="GO" id="GO:0006457">
    <property type="term" value="P:protein folding"/>
    <property type="evidence" value="ECO:0007669"/>
    <property type="project" value="UniProtKB-UniRule"/>
</dbReference>
<dbReference type="Gene3D" id="1.20.120.1820">
    <property type="match status" value="1"/>
</dbReference>
<dbReference type="Gene3D" id="1.20.1280.20">
    <property type="entry name" value="HscB, C-terminal domain"/>
    <property type="match status" value="1"/>
</dbReference>
<dbReference type="HAMAP" id="MF_01150">
    <property type="entry name" value="TorD"/>
    <property type="match status" value="1"/>
</dbReference>
<dbReference type="InterPro" id="IPR023069">
    <property type="entry name" value="Chaperone_TorD"/>
</dbReference>
<dbReference type="InterPro" id="IPR020945">
    <property type="entry name" value="DMSO/NO3_reduct_chaperone"/>
</dbReference>
<dbReference type="InterPro" id="IPR036386">
    <property type="entry name" value="HscB_C_sf"/>
</dbReference>
<dbReference type="InterPro" id="IPR036411">
    <property type="entry name" value="TorD-like_sf"/>
</dbReference>
<dbReference type="InterPro" id="IPR050289">
    <property type="entry name" value="TorD/DmsD_chaperones"/>
</dbReference>
<dbReference type="NCBIfam" id="NF003442">
    <property type="entry name" value="PRK04976.1"/>
    <property type="match status" value="1"/>
</dbReference>
<dbReference type="PANTHER" id="PTHR34227:SF11">
    <property type="entry name" value="CHAPERONE PROTEIN TORD"/>
    <property type="match status" value="1"/>
</dbReference>
<dbReference type="PANTHER" id="PTHR34227">
    <property type="entry name" value="CHAPERONE PROTEIN YCDY"/>
    <property type="match status" value="1"/>
</dbReference>
<dbReference type="Pfam" id="PF02613">
    <property type="entry name" value="Nitrate_red_del"/>
    <property type="match status" value="1"/>
</dbReference>
<dbReference type="SUPFAM" id="SSF89155">
    <property type="entry name" value="TorD-like"/>
    <property type="match status" value="1"/>
</dbReference>
<accession>B4TMY9</accession>
<evidence type="ECO:0000255" key="1">
    <source>
        <dbReference type="HAMAP-Rule" id="MF_01150"/>
    </source>
</evidence>